<protein>
    <recommendedName>
        <fullName evidence="1">Sugar fermentation stimulation protein homolog</fullName>
    </recommendedName>
</protein>
<accession>Q2YRG1</accession>
<keyword id="KW-1185">Reference proteome</keyword>
<proteinExistence type="inferred from homology"/>
<name>SFSA_BRUA2</name>
<gene>
    <name evidence="1" type="primary">sfsA</name>
    <name type="ordered locus">BAB1_1299</name>
</gene>
<organism>
    <name type="scientific">Brucella abortus (strain 2308)</name>
    <dbReference type="NCBI Taxonomy" id="359391"/>
    <lineage>
        <taxon>Bacteria</taxon>
        <taxon>Pseudomonadati</taxon>
        <taxon>Pseudomonadota</taxon>
        <taxon>Alphaproteobacteria</taxon>
        <taxon>Hyphomicrobiales</taxon>
        <taxon>Brucellaceae</taxon>
        <taxon>Brucella/Ochrobactrum group</taxon>
        <taxon>Brucella</taxon>
    </lineage>
</organism>
<sequence length="238" mass="26440">MLFPTPLISGRLERRYKRFLADVTLDDGRFITASVPNTGSMLGLTAPGSRVWLSFSDAPHRKYAHTLQIVEADNTLVGVNTGLPNRIAEEAILKGLIPDLDGYATLKREQKYGRNSRIDLLLDDGPRPRAYVEVKNVHFIRTPGLAEFPDTVTARGAKHLDELVDVVAAGHRGIMLFIIQRADCSRFGISGDLDPFYARAFERAIASGVEAWAVRCHITENGIDATELVPIEDMRRIE</sequence>
<dbReference type="EMBL" id="AM040264">
    <property type="protein sequence ID" value="CAJ11255.1"/>
    <property type="molecule type" value="Genomic_DNA"/>
</dbReference>
<dbReference type="RefSeq" id="WP_002964399.1">
    <property type="nucleotide sequence ID" value="NZ_KN046823.1"/>
</dbReference>
<dbReference type="SMR" id="Q2YRG1"/>
<dbReference type="STRING" id="359391.BAB1_1299"/>
<dbReference type="GeneID" id="97533485"/>
<dbReference type="KEGG" id="bmf:BAB1_1299"/>
<dbReference type="PATRIC" id="fig|359391.11.peg.748"/>
<dbReference type="HOGENOM" id="CLU_052299_2_0_5"/>
<dbReference type="PhylomeDB" id="Q2YRG1"/>
<dbReference type="Proteomes" id="UP000002719">
    <property type="component" value="Chromosome I"/>
</dbReference>
<dbReference type="GO" id="GO:0003677">
    <property type="term" value="F:DNA binding"/>
    <property type="evidence" value="ECO:0007669"/>
    <property type="project" value="InterPro"/>
</dbReference>
<dbReference type="CDD" id="cd22359">
    <property type="entry name" value="SfsA-like_bacterial"/>
    <property type="match status" value="1"/>
</dbReference>
<dbReference type="Gene3D" id="2.40.50.580">
    <property type="match status" value="1"/>
</dbReference>
<dbReference type="Gene3D" id="3.40.1350.60">
    <property type="match status" value="1"/>
</dbReference>
<dbReference type="HAMAP" id="MF_00095">
    <property type="entry name" value="SfsA"/>
    <property type="match status" value="1"/>
</dbReference>
<dbReference type="InterPro" id="IPR005224">
    <property type="entry name" value="SfsA"/>
</dbReference>
<dbReference type="InterPro" id="IPR040452">
    <property type="entry name" value="SfsA_C"/>
</dbReference>
<dbReference type="InterPro" id="IPR041465">
    <property type="entry name" value="SfsA_N"/>
</dbReference>
<dbReference type="NCBIfam" id="TIGR00230">
    <property type="entry name" value="sfsA"/>
    <property type="match status" value="1"/>
</dbReference>
<dbReference type="PANTHER" id="PTHR30545">
    <property type="entry name" value="SUGAR FERMENTATION STIMULATION PROTEIN A"/>
    <property type="match status" value="1"/>
</dbReference>
<dbReference type="PANTHER" id="PTHR30545:SF2">
    <property type="entry name" value="SUGAR FERMENTATION STIMULATION PROTEIN A"/>
    <property type="match status" value="1"/>
</dbReference>
<dbReference type="Pfam" id="PF03749">
    <property type="entry name" value="SfsA"/>
    <property type="match status" value="1"/>
</dbReference>
<dbReference type="Pfam" id="PF17746">
    <property type="entry name" value="SfsA_N"/>
    <property type="match status" value="1"/>
</dbReference>
<feature type="chain" id="PRO_1000007969" description="Sugar fermentation stimulation protein homolog">
    <location>
        <begin position="1"/>
        <end position="238"/>
    </location>
</feature>
<reference key="1">
    <citation type="journal article" date="2005" name="Infect. Immun.">
        <title>Whole-genome analyses of speciation events in pathogenic Brucellae.</title>
        <authorList>
            <person name="Chain P.S."/>
            <person name="Comerci D.J."/>
            <person name="Tolmasky M.E."/>
            <person name="Larimer F.W."/>
            <person name="Malfatti S.A."/>
            <person name="Vergez L.M."/>
            <person name="Aguero F."/>
            <person name="Land M.L."/>
            <person name="Ugalde R.A."/>
            <person name="Garcia E."/>
        </authorList>
    </citation>
    <scope>NUCLEOTIDE SEQUENCE [LARGE SCALE GENOMIC DNA]</scope>
    <source>
        <strain>2308</strain>
    </source>
</reference>
<comment type="similarity">
    <text evidence="1">Belongs to the SfsA family.</text>
</comment>
<evidence type="ECO:0000255" key="1">
    <source>
        <dbReference type="HAMAP-Rule" id="MF_00095"/>
    </source>
</evidence>